<feature type="chain" id="PRO_0000259359" description="Putative HTH-type transcriptional regulatory protein Mbar_A2318">
    <location>
        <begin position="1"/>
        <end position="327"/>
    </location>
</feature>
<feature type="domain" description="HTH cro/C1-type" evidence="1">
    <location>
        <begin position="132"/>
        <end position="190"/>
    </location>
</feature>
<feature type="DNA-binding region" description="H-T-H motif" evidence="1">
    <location>
        <begin position="143"/>
        <end position="162"/>
    </location>
</feature>
<protein>
    <recommendedName>
        <fullName evidence="1">Putative HTH-type transcriptional regulatory protein Mbar_A2318</fullName>
    </recommendedName>
</protein>
<reference key="1">
    <citation type="journal article" date="2006" name="J. Bacteriol.">
        <title>The Methanosarcina barkeri genome: comparative analysis with Methanosarcina acetivorans and Methanosarcina mazei reveals extensive rearrangement within methanosarcinal genomes.</title>
        <authorList>
            <person name="Maeder D.L."/>
            <person name="Anderson I."/>
            <person name="Brettin T.S."/>
            <person name="Bruce D.C."/>
            <person name="Gilna P."/>
            <person name="Han C.S."/>
            <person name="Lapidus A."/>
            <person name="Metcalf W.W."/>
            <person name="Saunders E."/>
            <person name="Tapia R."/>
            <person name="Sowers K.R."/>
        </authorList>
    </citation>
    <scope>NUCLEOTIDE SEQUENCE [LARGE SCALE GENOMIC DNA]</scope>
    <source>
        <strain>Fusaro / DSM 804</strain>
    </source>
</reference>
<organism>
    <name type="scientific">Methanosarcina barkeri (strain Fusaro / DSM 804)</name>
    <dbReference type="NCBI Taxonomy" id="269797"/>
    <lineage>
        <taxon>Archaea</taxon>
        <taxon>Methanobacteriati</taxon>
        <taxon>Methanobacteriota</taxon>
        <taxon>Stenosarchaea group</taxon>
        <taxon>Methanomicrobia</taxon>
        <taxon>Methanosarcinales</taxon>
        <taxon>Methanosarcinaceae</taxon>
        <taxon>Methanosarcina</taxon>
    </lineage>
</organism>
<evidence type="ECO:0000255" key="1">
    <source>
        <dbReference type="HAMAP-Rule" id="MF_00584"/>
    </source>
</evidence>
<gene>
    <name type="ordered locus">Mbar_A2318</name>
</gene>
<proteinExistence type="inferred from homology"/>
<dbReference type="EMBL" id="CP000099">
    <property type="protein sequence ID" value="AAZ71242.1"/>
    <property type="molecule type" value="Genomic_DNA"/>
</dbReference>
<dbReference type="SMR" id="Q46A50"/>
<dbReference type="STRING" id="269797.Mbar_A2318"/>
<dbReference type="PaxDb" id="269797-Mbar_A2318"/>
<dbReference type="KEGG" id="mba:Mbar_A2318"/>
<dbReference type="eggNOG" id="arCOG04152">
    <property type="taxonomic scope" value="Archaea"/>
</dbReference>
<dbReference type="HOGENOM" id="CLU_075726_0_0_2"/>
<dbReference type="OrthoDB" id="31424at2157"/>
<dbReference type="GO" id="GO:0003677">
    <property type="term" value="F:DNA binding"/>
    <property type="evidence" value="ECO:0007669"/>
    <property type="project" value="UniProtKB-KW"/>
</dbReference>
<dbReference type="GO" id="GO:0003700">
    <property type="term" value="F:DNA-binding transcription factor activity"/>
    <property type="evidence" value="ECO:0007669"/>
    <property type="project" value="UniProtKB-UniRule"/>
</dbReference>
<dbReference type="CDD" id="cd00093">
    <property type="entry name" value="HTH_XRE"/>
    <property type="match status" value="1"/>
</dbReference>
<dbReference type="Gene3D" id="1.10.260.40">
    <property type="entry name" value="lambda repressor-like DNA-binding domains"/>
    <property type="match status" value="1"/>
</dbReference>
<dbReference type="HAMAP" id="MF_00584">
    <property type="entry name" value="HTH_type_cro_C1"/>
    <property type="match status" value="1"/>
</dbReference>
<dbReference type="InterPro" id="IPR020886">
    <property type="entry name" value="Arc_TR_HTH"/>
</dbReference>
<dbReference type="InterPro" id="IPR001387">
    <property type="entry name" value="Cro/C1-type_HTH"/>
</dbReference>
<dbReference type="InterPro" id="IPR010982">
    <property type="entry name" value="Lambda_DNA-bd_dom_sf"/>
</dbReference>
<dbReference type="NCBIfam" id="NF003162">
    <property type="entry name" value="PRK04140.1"/>
    <property type="match status" value="1"/>
</dbReference>
<dbReference type="Pfam" id="PF01381">
    <property type="entry name" value="HTH_3"/>
    <property type="match status" value="1"/>
</dbReference>
<dbReference type="SMART" id="SM00530">
    <property type="entry name" value="HTH_XRE"/>
    <property type="match status" value="1"/>
</dbReference>
<dbReference type="SUPFAM" id="SSF47413">
    <property type="entry name" value="lambda repressor-like DNA-binding domains"/>
    <property type="match status" value="1"/>
</dbReference>
<dbReference type="PROSITE" id="PS50943">
    <property type="entry name" value="HTH_CROC1"/>
    <property type="match status" value="1"/>
</dbReference>
<accession>Q46A50</accession>
<name>Y2318_METBF</name>
<keyword id="KW-0238">DNA-binding</keyword>
<keyword id="KW-0804">Transcription</keyword>
<keyword id="KW-0805">Transcription regulation</keyword>
<sequence length="327" mass="36538">MTKEVLIHQIIDVLARAGFALSDRCNIRPRSFDVAARKDETLLLCKVLFNIDGLNEETAREMKYLAEYLGGSAIVVGAKTRDQMLEDSVVYMRYDILALNVQTLYDYFIENVPPLVSAAPGGLYVSIEGDILKKARMGQSMSLGTLASMVGVSRRTISKYEEEGMDASIDVVLQLEDIFGVELAKPINILKSCGSRKPRKKAESRTETQEKPYTLLPEDLILNTISMLGYDVLPTTQAPFKAISRDKSSVILTGVSEFNTTVVKRAHLMSSISCVTETQSVFIINGHSKIKSVENTVMIEKKELDKISDSQELLNFIEERRETHDEK</sequence>